<evidence type="ECO:0000255" key="1">
    <source>
        <dbReference type="HAMAP-Rule" id="MF_00591"/>
    </source>
</evidence>
<evidence type="ECO:0000269" key="2">
    <source>
    </source>
</evidence>
<evidence type="ECO:0000305" key="3">
    <source>
    </source>
</evidence>
<evidence type="ECO:0007829" key="4">
    <source>
        <dbReference type="PDB" id="2PO0"/>
    </source>
</evidence>
<evidence type="ECO:0007829" key="5">
    <source>
        <dbReference type="PDB" id="2PO1"/>
    </source>
</evidence>
<keyword id="KW-0002">3D-structure</keyword>
<keyword id="KW-0963">Cytoplasm</keyword>
<keyword id="KW-0269">Exonuclease</keyword>
<keyword id="KW-0271">Exosome</keyword>
<keyword id="KW-0378">Hydrolase</keyword>
<keyword id="KW-0540">Nuclease</keyword>
<name>RRP41_PYRAB</name>
<accession>Q9V119</accession>
<accession>G8ZJ75</accession>
<protein>
    <recommendedName>
        <fullName evidence="1">Exosome complex component Rrp41</fullName>
        <ecNumber evidence="1">3.1.13.-</ecNumber>
    </recommendedName>
</protein>
<gene>
    <name evidence="1" type="primary">rrp41</name>
    <name type="ordered locus">PYRAB06100</name>
    <name type="ORF">PAB0420</name>
</gene>
<reference key="1">
    <citation type="journal article" date="2003" name="Mol. Microbiol.">
        <title>An integrated analysis of the genome of the hyperthermophilic archaeon Pyrococcus abyssi.</title>
        <authorList>
            <person name="Cohen G.N."/>
            <person name="Barbe V."/>
            <person name="Flament D."/>
            <person name="Galperin M."/>
            <person name="Heilig R."/>
            <person name="Lecompte O."/>
            <person name="Poch O."/>
            <person name="Prieur D."/>
            <person name="Querellou J."/>
            <person name="Ripp R."/>
            <person name="Thierry J.-C."/>
            <person name="Van der Oost J."/>
            <person name="Weissenbach J."/>
            <person name="Zivanovic Y."/>
            <person name="Forterre P."/>
        </authorList>
    </citation>
    <scope>NUCLEOTIDE SEQUENCE [LARGE SCALE GENOMIC DNA]</scope>
    <source>
        <strain>GE5 / Orsay</strain>
    </source>
</reference>
<reference key="2">
    <citation type="journal article" date="2012" name="Curr. Microbiol.">
        <title>Re-annotation of two hyperthermophilic archaea Pyrococcus abyssi GE5 and Pyrococcus furiosus DSM 3638.</title>
        <authorList>
            <person name="Gao J."/>
            <person name="Wang J."/>
        </authorList>
    </citation>
    <scope>GENOME REANNOTATION</scope>
    <source>
        <strain>GE5 / Orsay</strain>
    </source>
</reference>
<reference key="3">
    <citation type="journal article" date="2008" name="J. Biol. Chem.">
        <title>Insights into the mechanism of progressive RNA degradation by the archaeal exosome.</title>
        <authorList>
            <person name="Navarro M.V."/>
            <person name="Oliveira C.C."/>
            <person name="Zanchin N.I."/>
            <person name="Guimaraes B.G."/>
        </authorList>
    </citation>
    <scope>X-RAY CRYSTALLOGRAPHY (1.94 ANGSTROMS) IN COMPLEX WITH RRP42</scope>
    <scope>FUNCTION</scope>
    <scope>MUTAGENESIS OF ARG-89; LYS-91; ARG-137; ASP-186 AND ASP-204</scope>
</reference>
<organism>
    <name type="scientific">Pyrococcus abyssi (strain GE5 / Orsay)</name>
    <dbReference type="NCBI Taxonomy" id="272844"/>
    <lineage>
        <taxon>Archaea</taxon>
        <taxon>Methanobacteriati</taxon>
        <taxon>Methanobacteriota</taxon>
        <taxon>Thermococci</taxon>
        <taxon>Thermococcales</taxon>
        <taxon>Thermococcaceae</taxon>
        <taxon>Pyrococcus</taxon>
    </lineage>
</organism>
<dbReference type="EC" id="3.1.13.-" evidence="1"/>
<dbReference type="EMBL" id="AJ248284">
    <property type="protein sequence ID" value="CAB49532.1"/>
    <property type="molecule type" value="Genomic_DNA"/>
</dbReference>
<dbReference type="EMBL" id="HE613800">
    <property type="protein sequence ID" value="CCE70002.1"/>
    <property type="molecule type" value="Genomic_DNA"/>
</dbReference>
<dbReference type="PIR" id="E75181">
    <property type="entry name" value="E75181"/>
</dbReference>
<dbReference type="RefSeq" id="WP_010867734.1">
    <property type="nucleotide sequence ID" value="NC_000868.1"/>
</dbReference>
<dbReference type="PDB" id="2PNZ">
    <property type="method" value="X-ray"/>
    <property type="resolution" value="2.14 A"/>
    <property type="chains" value="A=1-249"/>
</dbReference>
<dbReference type="PDB" id="2PO0">
    <property type="method" value="X-ray"/>
    <property type="resolution" value="2.30 A"/>
    <property type="chains" value="A=1-249"/>
</dbReference>
<dbReference type="PDB" id="2PO1">
    <property type="method" value="X-ray"/>
    <property type="resolution" value="1.94 A"/>
    <property type="chains" value="A=1-249"/>
</dbReference>
<dbReference type="PDB" id="2PO2">
    <property type="method" value="X-ray"/>
    <property type="resolution" value="2.41 A"/>
    <property type="chains" value="A=1-249"/>
</dbReference>
<dbReference type="PDBsum" id="2PNZ"/>
<dbReference type="PDBsum" id="2PO0"/>
<dbReference type="PDBsum" id="2PO1"/>
<dbReference type="PDBsum" id="2PO2"/>
<dbReference type="SMR" id="Q9V119"/>
<dbReference type="STRING" id="272844.PAB0420"/>
<dbReference type="KEGG" id="pab:PAB0420"/>
<dbReference type="PATRIC" id="fig|272844.11.peg.648"/>
<dbReference type="eggNOG" id="arCOG01575">
    <property type="taxonomic scope" value="Archaea"/>
</dbReference>
<dbReference type="HOGENOM" id="CLU_063514_0_0_2"/>
<dbReference type="OrthoDB" id="24266at2157"/>
<dbReference type="PhylomeDB" id="Q9V119"/>
<dbReference type="EvolutionaryTrace" id="Q9V119"/>
<dbReference type="Proteomes" id="UP000000810">
    <property type="component" value="Chromosome"/>
</dbReference>
<dbReference type="Proteomes" id="UP000009139">
    <property type="component" value="Chromosome"/>
</dbReference>
<dbReference type="GO" id="GO:0000177">
    <property type="term" value="C:cytoplasmic exosome (RNase complex)"/>
    <property type="evidence" value="ECO:0007669"/>
    <property type="project" value="TreeGrafter"/>
</dbReference>
<dbReference type="GO" id="GO:0000175">
    <property type="term" value="F:3'-5'-RNA exonuclease activity"/>
    <property type="evidence" value="ECO:0007669"/>
    <property type="project" value="UniProtKB-UniRule"/>
</dbReference>
<dbReference type="GO" id="GO:0003723">
    <property type="term" value="F:RNA binding"/>
    <property type="evidence" value="ECO:0007669"/>
    <property type="project" value="TreeGrafter"/>
</dbReference>
<dbReference type="GO" id="GO:0010467">
    <property type="term" value="P:gene expression"/>
    <property type="evidence" value="ECO:0007669"/>
    <property type="project" value="UniProtKB-ARBA"/>
</dbReference>
<dbReference type="GO" id="GO:0016075">
    <property type="term" value="P:rRNA catabolic process"/>
    <property type="evidence" value="ECO:0007669"/>
    <property type="project" value="TreeGrafter"/>
</dbReference>
<dbReference type="CDD" id="cd11366">
    <property type="entry name" value="RNase_PH_archRRP41"/>
    <property type="match status" value="1"/>
</dbReference>
<dbReference type="FunFam" id="3.30.230.70:FF:000004">
    <property type="entry name" value="Exosome complex component Rrp41"/>
    <property type="match status" value="1"/>
</dbReference>
<dbReference type="Gene3D" id="3.30.230.70">
    <property type="entry name" value="GHMP Kinase, N-terminal domain"/>
    <property type="match status" value="1"/>
</dbReference>
<dbReference type="HAMAP" id="MF_00591">
    <property type="entry name" value="Exosome_Rrp41"/>
    <property type="match status" value="1"/>
</dbReference>
<dbReference type="InterPro" id="IPR001247">
    <property type="entry name" value="ExoRNase_PH_dom1"/>
</dbReference>
<dbReference type="InterPro" id="IPR015847">
    <property type="entry name" value="ExoRNase_PH_dom2"/>
</dbReference>
<dbReference type="InterPro" id="IPR036345">
    <property type="entry name" value="ExoRNase_PH_dom2_sf"/>
</dbReference>
<dbReference type="InterPro" id="IPR027408">
    <property type="entry name" value="PNPase/RNase_PH_dom_sf"/>
</dbReference>
<dbReference type="InterPro" id="IPR020568">
    <property type="entry name" value="Ribosomal_Su5_D2-typ_SF"/>
</dbReference>
<dbReference type="InterPro" id="IPR050080">
    <property type="entry name" value="RNase_PH"/>
</dbReference>
<dbReference type="InterPro" id="IPR011807">
    <property type="entry name" value="Rrp41"/>
</dbReference>
<dbReference type="NCBIfam" id="TIGR02065">
    <property type="entry name" value="ECX1"/>
    <property type="match status" value="1"/>
</dbReference>
<dbReference type="PANTHER" id="PTHR11953">
    <property type="entry name" value="EXOSOME COMPLEX COMPONENT"/>
    <property type="match status" value="1"/>
</dbReference>
<dbReference type="PANTHER" id="PTHR11953:SF0">
    <property type="entry name" value="EXOSOME COMPLEX COMPONENT RRP41"/>
    <property type="match status" value="1"/>
</dbReference>
<dbReference type="Pfam" id="PF01138">
    <property type="entry name" value="RNase_PH"/>
    <property type="match status" value="1"/>
</dbReference>
<dbReference type="Pfam" id="PF03725">
    <property type="entry name" value="RNase_PH_C"/>
    <property type="match status" value="1"/>
</dbReference>
<dbReference type="SUPFAM" id="SSF55666">
    <property type="entry name" value="Ribonuclease PH domain 2-like"/>
    <property type="match status" value="1"/>
</dbReference>
<dbReference type="SUPFAM" id="SSF54211">
    <property type="entry name" value="Ribosomal protein S5 domain 2-like"/>
    <property type="match status" value="1"/>
</dbReference>
<comment type="function">
    <text evidence="3">Catalytic component of the exosome, which is a complex involved in RNA degradation. Has 3'-&gt;5' exoribonuclease activity. Can also synthesize heteromeric RNA-tails (Probable).</text>
</comment>
<comment type="subunit">
    <text evidence="1">Component of the archaeal exosome complex. Forms a hexameric ring-like arrangement composed of 3 Rrp41-Rrp42 heterodimers. The hexameric ring associates with a trimer of Rrp4 and/or Csl4 subunits.</text>
</comment>
<comment type="subcellular location">
    <subcellularLocation>
        <location evidence="1">Cytoplasm</location>
    </subcellularLocation>
</comment>
<comment type="similarity">
    <text evidence="1">Belongs to the RNase PH family. Rrp41 subfamily.</text>
</comment>
<sequence length="249" mass="27678">MMEKPEGLKLIDENGRRIDGRKKYELRPIKMEVGVLKNANGSAYIEWGKNKIIAAVYGPRELHPKHLQRPDRAILRVRYNMAPFSVEERKKPGPDRRSIEISKVIKGALEPALILEMFPRTAIDVFIEVLQADAGTRVAGITAASLALADAGIPMRDLVAACAAGKIEGEIVLDLNKEEDNYGEADVPVAIMPLKNDITLLQMDGYLTKDEFIEAVKLAIKGAKAVYQKQREALKEKYLKIAQEVEGSE</sequence>
<feature type="chain" id="PRO_0000139985" description="Exosome complex component Rrp41">
    <location>
        <begin position="1"/>
        <end position="249"/>
    </location>
</feature>
<feature type="mutagenesis site" description="Does not affect ring assembly, but abolishes RNA degradation; when associated with E-91." evidence="2">
    <original>R</original>
    <variation>E</variation>
    <location>
        <position position="89"/>
    </location>
</feature>
<feature type="mutagenesis site" description="Does not affect ring assembly, but abolishes RNA degradation; when associated with E-89." evidence="2">
    <original>K</original>
    <variation>E</variation>
    <location>
        <position position="91"/>
    </location>
</feature>
<feature type="mutagenesis site" description="Decrease in activity." evidence="2">
    <original>R</original>
    <variation>A</variation>
    <location>
        <position position="137"/>
    </location>
</feature>
<feature type="mutagenesis site" description="Abolishes RNA degradation." evidence="2">
    <original>D</original>
    <variation>A</variation>
    <location>
        <position position="186"/>
    </location>
</feature>
<feature type="mutagenesis site" description="Decrease in activity." evidence="2">
    <original>D</original>
    <variation>A</variation>
    <location>
        <position position="204"/>
    </location>
</feature>
<feature type="strand" evidence="4">
    <location>
        <begin position="11"/>
        <end position="13"/>
    </location>
</feature>
<feature type="strand" evidence="5">
    <location>
        <begin position="29"/>
        <end position="33"/>
    </location>
</feature>
<feature type="strand" evidence="5">
    <location>
        <begin position="37"/>
        <end position="47"/>
    </location>
</feature>
<feature type="strand" evidence="5">
    <location>
        <begin position="50"/>
        <end position="61"/>
    </location>
</feature>
<feature type="helix" evidence="5">
    <location>
        <begin position="65"/>
        <end position="67"/>
    </location>
</feature>
<feature type="strand" evidence="5">
    <location>
        <begin position="70"/>
        <end position="72"/>
    </location>
</feature>
<feature type="strand" evidence="5">
    <location>
        <begin position="74"/>
        <end position="81"/>
    </location>
</feature>
<feature type="helix" evidence="5">
    <location>
        <begin position="83"/>
        <end position="85"/>
    </location>
</feature>
<feature type="strand" evidence="5">
    <location>
        <begin position="86"/>
        <end position="88"/>
    </location>
</feature>
<feature type="helix" evidence="5">
    <location>
        <begin position="96"/>
        <end position="109"/>
    </location>
</feature>
<feature type="helix" evidence="5">
    <location>
        <begin position="110"/>
        <end position="112"/>
    </location>
</feature>
<feature type="helix" evidence="5">
    <location>
        <begin position="115"/>
        <end position="117"/>
    </location>
</feature>
<feature type="strand" evidence="5">
    <location>
        <begin position="121"/>
        <end position="131"/>
    </location>
</feature>
<feature type="helix" evidence="5">
    <location>
        <begin position="136"/>
        <end position="150"/>
    </location>
</feature>
<feature type="strand" evidence="5">
    <location>
        <begin position="155"/>
        <end position="157"/>
    </location>
</feature>
<feature type="strand" evidence="5">
    <location>
        <begin position="160"/>
        <end position="167"/>
    </location>
</feature>
<feature type="strand" evidence="5">
    <location>
        <begin position="170"/>
        <end position="174"/>
    </location>
</feature>
<feature type="helix" evidence="5">
    <location>
        <begin position="177"/>
        <end position="181"/>
    </location>
</feature>
<feature type="strand" evidence="5">
    <location>
        <begin position="184"/>
        <end position="192"/>
    </location>
</feature>
<feature type="turn" evidence="5">
    <location>
        <begin position="193"/>
        <end position="196"/>
    </location>
</feature>
<feature type="strand" evidence="5">
    <location>
        <begin position="197"/>
        <end position="201"/>
    </location>
</feature>
<feature type="helix" evidence="5">
    <location>
        <begin position="209"/>
        <end position="241"/>
    </location>
</feature>
<proteinExistence type="evidence at protein level"/>